<dbReference type="EMBL" id="X71629">
    <property type="protein sequence ID" value="CAA50636.1"/>
    <property type="molecule type" value="mRNA"/>
</dbReference>
<dbReference type="EMBL" id="BC031806">
    <property type="protein sequence ID" value="AAH31806.1"/>
    <property type="molecule type" value="mRNA"/>
</dbReference>
<dbReference type="EMBL" id="BC031921">
    <property type="protein sequence ID" value="AAH31921.1"/>
    <property type="molecule type" value="mRNA"/>
</dbReference>
<dbReference type="EMBL" id="BC034553">
    <property type="protein sequence ID" value="AAH34553.1"/>
    <property type="molecule type" value="mRNA"/>
</dbReference>
<dbReference type="EMBL" id="BC055857">
    <property type="protein sequence ID" value="AAH55857.1"/>
    <property type="molecule type" value="mRNA"/>
</dbReference>
<dbReference type="EMBL" id="BC141243">
    <property type="protein sequence ID" value="AAI41244.1"/>
    <property type="molecule type" value="mRNA"/>
</dbReference>
<dbReference type="EMBL" id="BC145569">
    <property type="protein sequence ID" value="AAI45570.1"/>
    <property type="molecule type" value="mRNA"/>
</dbReference>
<dbReference type="CCDS" id="CCDS19398.1"/>
<dbReference type="PIR" id="I48669">
    <property type="entry name" value="S37485"/>
</dbReference>
<dbReference type="RefSeq" id="NP_035552.1">
    <property type="nucleotide sequence ID" value="NM_011422.4"/>
</dbReference>
<dbReference type="RefSeq" id="XP_017176242.1">
    <property type="nucleotide sequence ID" value="XM_017320753.2"/>
</dbReference>
<dbReference type="STRING" id="10090.ENSMUSP00000031211"/>
<dbReference type="GlyGen" id="Q61900">
    <property type="glycosylation" value="1 site"/>
</dbReference>
<dbReference type="PaxDb" id="10090-ENSMUSP00000031211"/>
<dbReference type="PeptideAtlas" id="Q61900"/>
<dbReference type="ProteomicsDB" id="257276"/>
<dbReference type="DNASU" id="20599"/>
<dbReference type="Ensembl" id="ENSMUST00000031211.6">
    <property type="protein sequence ID" value="ENSMUSP00000031211.5"/>
    <property type="gene ID" value="ENSMUSG00000029280.14"/>
</dbReference>
<dbReference type="GeneID" id="20599"/>
<dbReference type="KEGG" id="mmu:20599"/>
<dbReference type="UCSC" id="uc012dxy.1">
    <property type="organism name" value="mouse"/>
</dbReference>
<dbReference type="AGR" id="MGI:102763"/>
<dbReference type="CTD" id="26952"/>
<dbReference type="MGI" id="MGI:102763">
    <property type="gene designation" value="Smr3a"/>
</dbReference>
<dbReference type="VEuPathDB" id="HostDB:ENSMUSG00000029280"/>
<dbReference type="GeneTree" id="ENSGT00860000135309"/>
<dbReference type="HOGENOM" id="CLU_150752_0_0_1"/>
<dbReference type="InParanoid" id="Q61900"/>
<dbReference type="OMA" id="PPYMDRD"/>
<dbReference type="TreeFam" id="TF338396"/>
<dbReference type="BioGRID-ORCS" id="20599">
    <property type="hits" value="1 hit in 76 CRISPR screens"/>
</dbReference>
<dbReference type="ChiTaRS" id="Smr3a">
    <property type="organism name" value="mouse"/>
</dbReference>
<dbReference type="PRO" id="PR:Q61900"/>
<dbReference type="Proteomes" id="UP000000589">
    <property type="component" value="Chromosome 5"/>
</dbReference>
<dbReference type="RNAct" id="Q61900">
    <property type="molecule type" value="protein"/>
</dbReference>
<dbReference type="Bgee" id="ENSMUSG00000029280">
    <property type="expression patterns" value="Expressed in esophagus and 6 other cell types or tissues"/>
</dbReference>
<dbReference type="ExpressionAtlas" id="Q61900">
    <property type="expression patterns" value="baseline and differential"/>
</dbReference>
<dbReference type="GO" id="GO:0005576">
    <property type="term" value="C:extracellular region"/>
    <property type="evidence" value="ECO:0007669"/>
    <property type="project" value="UniProtKB-SubCell"/>
</dbReference>
<dbReference type="InterPro" id="IPR026288">
    <property type="entry name" value="SMR-like"/>
</dbReference>
<dbReference type="PANTHER" id="PTHR14179">
    <property type="entry name" value="SMR1-RELATED"/>
    <property type="match status" value="1"/>
</dbReference>
<dbReference type="PANTHER" id="PTHR14179:SF13">
    <property type="entry name" value="SUBMAXILLARY GLAND ANDROGEN-REGULATED PROTEIN 3B"/>
    <property type="match status" value="1"/>
</dbReference>
<dbReference type="Pfam" id="PF15621">
    <property type="entry name" value="PROL5-SMR"/>
    <property type="match status" value="1"/>
</dbReference>
<keyword id="KW-1185">Reference proteome</keyword>
<keyword id="KW-0677">Repeat</keyword>
<keyword id="KW-0964">Secreted</keyword>
<keyword id="KW-0732">Signal</keyword>
<proteinExistence type="evidence at transcript level"/>
<reference key="1">
    <citation type="journal article" date="1994" name="Gene">
        <title>Three novel SMR1-related cDNAs characterized in the submaxillary gland of mice show extensive evolutionary divergence in the protein coding region.</title>
        <authorList>
            <person name="Tronik-Le Roux D."/>
            <person name="Senorale-Pose M."/>
            <person name="Rougeon F."/>
        </authorList>
    </citation>
    <scope>NUCLEOTIDE SEQUENCE [MRNA]</scope>
    <source>
        <strain>BALB/cJ</strain>
        <tissue>Submandibular gland</tissue>
    </source>
</reference>
<reference key="2">
    <citation type="journal article" date="2004" name="Genome Res.">
        <title>The status, quality, and expansion of the NIH full-length cDNA project: the Mammalian Gene Collection (MGC).</title>
        <authorList>
            <consortium name="The MGC Project Team"/>
        </authorList>
    </citation>
    <scope>NUCLEOTIDE SEQUENCE [LARGE SCALE MRNA]</scope>
    <source>
        <tissue>Brain</tissue>
        <tissue>Salivary gland</tissue>
    </source>
</reference>
<accession>Q61900</accession>
<accession>B7ZP11</accession>
<name>SMR3A_MOUSE</name>
<gene>
    <name type="primary">Smr3a</name>
    <name type="synonym">Msg1</name>
    <name type="synonym">Smr1</name>
</gene>
<protein>
    <recommendedName>
        <fullName>Submaxillary gland androgen-regulated protein 3A</fullName>
    </recommendedName>
    <alternativeName>
        <fullName>Salivary protein MSG1</fullName>
    </alternativeName>
    <alternativeName>
        <fullName>Submaxillary gland androgen-regulated protein 1</fullName>
    </alternativeName>
</protein>
<feature type="signal peptide" evidence="1">
    <location>
        <begin position="1"/>
        <end position="22"/>
    </location>
</feature>
<feature type="chain" id="PRO_0000022368" description="Submaxillary gland androgen-regulated protein 3A">
    <location>
        <begin position="23"/>
        <end position="147"/>
    </location>
</feature>
<feature type="repeat" description="1">
    <location>
        <begin position="43"/>
        <end position="54"/>
    </location>
</feature>
<feature type="repeat" description="2">
    <location>
        <begin position="55"/>
        <end position="66"/>
    </location>
</feature>
<feature type="repeat" description="3">
    <location>
        <begin position="67"/>
        <end position="78"/>
    </location>
</feature>
<feature type="region of interest" description="Disordered" evidence="2">
    <location>
        <begin position="27"/>
        <end position="128"/>
    </location>
</feature>
<feature type="region of interest" description="3 X 12 AA tandem repeats of G-P-G-I-G-R-P-[HP]-P-P-P-[PF]">
    <location>
        <begin position="43"/>
        <end position="78"/>
    </location>
</feature>
<feature type="compositionally biased region" description="Pro residues" evidence="2">
    <location>
        <begin position="33"/>
        <end position="105"/>
    </location>
</feature>
<feature type="compositionally biased region" description="Polar residues" evidence="2">
    <location>
        <begin position="108"/>
        <end position="127"/>
    </location>
</feature>
<organism>
    <name type="scientific">Mus musculus</name>
    <name type="common">Mouse</name>
    <dbReference type="NCBI Taxonomy" id="10090"/>
    <lineage>
        <taxon>Eukaryota</taxon>
        <taxon>Metazoa</taxon>
        <taxon>Chordata</taxon>
        <taxon>Craniata</taxon>
        <taxon>Vertebrata</taxon>
        <taxon>Euteleostomi</taxon>
        <taxon>Mammalia</taxon>
        <taxon>Eutheria</taxon>
        <taxon>Euarchontoglires</taxon>
        <taxon>Glires</taxon>
        <taxon>Rodentia</taxon>
        <taxon>Myomorpha</taxon>
        <taxon>Muroidea</taxon>
        <taxon>Muridae</taxon>
        <taxon>Murinae</taxon>
        <taxon>Mus</taxon>
        <taxon>Mus</taxon>
    </lineage>
</organism>
<evidence type="ECO:0000255" key="1"/>
<evidence type="ECO:0000256" key="2">
    <source>
        <dbReference type="SAM" id="MobiDB-lite"/>
    </source>
</evidence>
<evidence type="ECO:0000305" key="3"/>
<comment type="function">
    <text>May play a role in protection or detoxification.</text>
</comment>
<comment type="subcellular location">
    <subcellularLocation>
        <location>Secreted</location>
    </subcellularLocation>
</comment>
<comment type="tissue specificity">
    <text>Secreted into saliva by submaxillary gland.</text>
</comment>
<comment type="similarity">
    <text evidence="3">Belongs to the PROL1/PROL3 family.</text>
</comment>
<sequence>MKPLNLVLGLCILVGCFLSCECHRGPRRHDPRGPFPPPPPPHGPGIGRPHPPPFGPGIGRPPPPPFGPGIGRPPPPPPCPPVPPHPRPPSNPSPPPTPSIPPTGPPTTVQATTMPAASISITTPTARDSTDIFWRLWELINSLLQQE</sequence>